<organism>
    <name type="scientific">Pseudomonas fluorescens (strain ATCC BAA-477 / NRRL B-23932 / Pf-5)</name>
    <dbReference type="NCBI Taxonomy" id="220664"/>
    <lineage>
        <taxon>Bacteria</taxon>
        <taxon>Pseudomonadati</taxon>
        <taxon>Pseudomonadota</taxon>
        <taxon>Gammaproteobacteria</taxon>
        <taxon>Pseudomonadales</taxon>
        <taxon>Pseudomonadaceae</taxon>
        <taxon>Pseudomonas</taxon>
    </lineage>
</organism>
<protein>
    <recommendedName>
        <fullName evidence="1">Guanylate kinase</fullName>
        <ecNumber evidence="1">2.7.4.8</ecNumber>
    </recommendedName>
    <alternativeName>
        <fullName evidence="1">GMP kinase</fullName>
    </alternativeName>
</protein>
<proteinExistence type="inferred from homology"/>
<gene>
    <name evidence="1" type="primary">gmk</name>
    <name type="ordered locus">PFL_6061</name>
</gene>
<evidence type="ECO:0000255" key="1">
    <source>
        <dbReference type="HAMAP-Rule" id="MF_00328"/>
    </source>
</evidence>
<accession>Q4K3R4</accession>
<keyword id="KW-0067">ATP-binding</keyword>
<keyword id="KW-0963">Cytoplasm</keyword>
<keyword id="KW-0418">Kinase</keyword>
<keyword id="KW-0547">Nucleotide-binding</keyword>
<keyword id="KW-0808">Transferase</keyword>
<feature type="chain" id="PRO_0000266371" description="Guanylate kinase">
    <location>
        <begin position="1"/>
        <end position="206"/>
    </location>
</feature>
<feature type="domain" description="Guanylate kinase-like" evidence="1">
    <location>
        <begin position="6"/>
        <end position="184"/>
    </location>
</feature>
<feature type="binding site" evidence="1">
    <location>
        <begin position="13"/>
        <end position="20"/>
    </location>
    <ligand>
        <name>ATP</name>
        <dbReference type="ChEBI" id="CHEBI:30616"/>
    </ligand>
</feature>
<comment type="function">
    <text evidence="1">Essential for recycling GMP and indirectly, cGMP.</text>
</comment>
<comment type="catalytic activity">
    <reaction evidence="1">
        <text>GMP + ATP = GDP + ADP</text>
        <dbReference type="Rhea" id="RHEA:20780"/>
        <dbReference type="ChEBI" id="CHEBI:30616"/>
        <dbReference type="ChEBI" id="CHEBI:58115"/>
        <dbReference type="ChEBI" id="CHEBI:58189"/>
        <dbReference type="ChEBI" id="CHEBI:456216"/>
        <dbReference type="EC" id="2.7.4.8"/>
    </reaction>
</comment>
<comment type="subcellular location">
    <subcellularLocation>
        <location evidence="1">Cytoplasm</location>
    </subcellularLocation>
</comment>
<comment type="similarity">
    <text evidence="1">Belongs to the guanylate kinase family.</text>
</comment>
<name>KGUA_PSEF5</name>
<sequence>MTHSTGTLYIISAPSGAGKSSLVKALTDAKPEIRVSVSHTTRAMRPGEVDGVNYHFVSRETFVKMGEHGDFLERAEVFGNLYGTSQSHLQQTLDAGHDLILEIDWQGAEQVRKLMPQARSIFILPPSLQALHQRLTNRGQDSDEVIDGRMREAVSEMSHYVDYDYLIINDDFAHALGDLKAIFRANQLQQKRQQQRFGKLLAELLG</sequence>
<reference key="1">
    <citation type="journal article" date="2005" name="Nat. Biotechnol.">
        <title>Complete genome sequence of the plant commensal Pseudomonas fluorescens Pf-5.</title>
        <authorList>
            <person name="Paulsen I.T."/>
            <person name="Press C.M."/>
            <person name="Ravel J."/>
            <person name="Kobayashi D.Y."/>
            <person name="Myers G.S.A."/>
            <person name="Mavrodi D.V."/>
            <person name="DeBoy R.T."/>
            <person name="Seshadri R."/>
            <person name="Ren Q."/>
            <person name="Madupu R."/>
            <person name="Dodson R.J."/>
            <person name="Durkin A.S."/>
            <person name="Brinkac L.M."/>
            <person name="Daugherty S.C."/>
            <person name="Sullivan S.A."/>
            <person name="Rosovitz M.J."/>
            <person name="Gwinn M.L."/>
            <person name="Zhou L."/>
            <person name="Schneider D.J."/>
            <person name="Cartinhour S.W."/>
            <person name="Nelson W.C."/>
            <person name="Weidman J."/>
            <person name="Watkins K."/>
            <person name="Tran K."/>
            <person name="Khouri H."/>
            <person name="Pierson E.A."/>
            <person name="Pierson L.S. III"/>
            <person name="Thomashow L.S."/>
            <person name="Loper J.E."/>
        </authorList>
    </citation>
    <scope>NUCLEOTIDE SEQUENCE [LARGE SCALE GENOMIC DNA]</scope>
    <source>
        <strain>ATCC BAA-477 / NRRL B-23932 / Pf-5</strain>
    </source>
</reference>
<dbReference type="EC" id="2.7.4.8" evidence="1"/>
<dbReference type="EMBL" id="CP000076">
    <property type="protein sequence ID" value="AAY95249.1"/>
    <property type="molecule type" value="Genomic_DNA"/>
</dbReference>
<dbReference type="RefSeq" id="WP_011064231.1">
    <property type="nucleotide sequence ID" value="NC_004129.6"/>
</dbReference>
<dbReference type="SMR" id="Q4K3R4"/>
<dbReference type="STRING" id="220664.PFL_6061"/>
<dbReference type="GeneID" id="57479020"/>
<dbReference type="KEGG" id="pfl:PFL_6061"/>
<dbReference type="PATRIC" id="fig|220664.5.peg.6188"/>
<dbReference type="eggNOG" id="COG0194">
    <property type="taxonomic scope" value="Bacteria"/>
</dbReference>
<dbReference type="HOGENOM" id="CLU_001715_1_0_6"/>
<dbReference type="Proteomes" id="UP000008540">
    <property type="component" value="Chromosome"/>
</dbReference>
<dbReference type="GO" id="GO:0005829">
    <property type="term" value="C:cytosol"/>
    <property type="evidence" value="ECO:0007669"/>
    <property type="project" value="TreeGrafter"/>
</dbReference>
<dbReference type="GO" id="GO:0005524">
    <property type="term" value="F:ATP binding"/>
    <property type="evidence" value="ECO:0007669"/>
    <property type="project" value="UniProtKB-UniRule"/>
</dbReference>
<dbReference type="GO" id="GO:0004385">
    <property type="term" value="F:guanylate kinase activity"/>
    <property type="evidence" value="ECO:0007669"/>
    <property type="project" value="UniProtKB-UniRule"/>
</dbReference>
<dbReference type="CDD" id="cd00071">
    <property type="entry name" value="GMPK"/>
    <property type="match status" value="1"/>
</dbReference>
<dbReference type="FunFam" id="3.40.50.300:FF:000084">
    <property type="entry name" value="Guanylate kinase"/>
    <property type="match status" value="1"/>
</dbReference>
<dbReference type="FunFam" id="3.30.63.10:FF:000002">
    <property type="entry name" value="Guanylate kinase 1"/>
    <property type="match status" value="1"/>
</dbReference>
<dbReference type="Gene3D" id="3.30.63.10">
    <property type="entry name" value="Guanylate Kinase phosphate binding domain"/>
    <property type="match status" value="1"/>
</dbReference>
<dbReference type="Gene3D" id="3.40.50.300">
    <property type="entry name" value="P-loop containing nucleotide triphosphate hydrolases"/>
    <property type="match status" value="1"/>
</dbReference>
<dbReference type="HAMAP" id="MF_00328">
    <property type="entry name" value="Guanylate_kinase"/>
    <property type="match status" value="1"/>
</dbReference>
<dbReference type="InterPro" id="IPR008145">
    <property type="entry name" value="GK/Ca_channel_bsu"/>
</dbReference>
<dbReference type="InterPro" id="IPR008144">
    <property type="entry name" value="Guanylate_kin-like_dom"/>
</dbReference>
<dbReference type="InterPro" id="IPR017665">
    <property type="entry name" value="Guanylate_kinase"/>
</dbReference>
<dbReference type="InterPro" id="IPR020590">
    <property type="entry name" value="Guanylate_kinase_CS"/>
</dbReference>
<dbReference type="InterPro" id="IPR027417">
    <property type="entry name" value="P-loop_NTPase"/>
</dbReference>
<dbReference type="NCBIfam" id="TIGR03263">
    <property type="entry name" value="guanyl_kin"/>
    <property type="match status" value="1"/>
</dbReference>
<dbReference type="PANTHER" id="PTHR23117:SF13">
    <property type="entry name" value="GUANYLATE KINASE"/>
    <property type="match status" value="1"/>
</dbReference>
<dbReference type="PANTHER" id="PTHR23117">
    <property type="entry name" value="GUANYLATE KINASE-RELATED"/>
    <property type="match status" value="1"/>
</dbReference>
<dbReference type="Pfam" id="PF00625">
    <property type="entry name" value="Guanylate_kin"/>
    <property type="match status" value="1"/>
</dbReference>
<dbReference type="SMART" id="SM00072">
    <property type="entry name" value="GuKc"/>
    <property type="match status" value="1"/>
</dbReference>
<dbReference type="SUPFAM" id="SSF52540">
    <property type="entry name" value="P-loop containing nucleoside triphosphate hydrolases"/>
    <property type="match status" value="1"/>
</dbReference>
<dbReference type="PROSITE" id="PS00856">
    <property type="entry name" value="GUANYLATE_KINASE_1"/>
    <property type="match status" value="1"/>
</dbReference>
<dbReference type="PROSITE" id="PS50052">
    <property type="entry name" value="GUANYLATE_KINASE_2"/>
    <property type="match status" value="1"/>
</dbReference>